<feature type="chain" id="PRO_1000092928" description="Peptidyl-tRNA hydrolase">
    <location>
        <begin position="1"/>
        <end position="191"/>
    </location>
</feature>
<feature type="active site" description="Proton acceptor" evidence="1">
    <location>
        <position position="19"/>
    </location>
</feature>
<feature type="binding site" evidence="1">
    <location>
        <position position="14"/>
    </location>
    <ligand>
        <name>tRNA</name>
        <dbReference type="ChEBI" id="CHEBI:17843"/>
    </ligand>
</feature>
<feature type="binding site" evidence="1">
    <location>
        <position position="64"/>
    </location>
    <ligand>
        <name>tRNA</name>
        <dbReference type="ChEBI" id="CHEBI:17843"/>
    </ligand>
</feature>
<feature type="binding site" evidence="1">
    <location>
        <position position="66"/>
    </location>
    <ligand>
        <name>tRNA</name>
        <dbReference type="ChEBI" id="CHEBI:17843"/>
    </ligand>
</feature>
<feature type="binding site" evidence="1">
    <location>
        <position position="112"/>
    </location>
    <ligand>
        <name>tRNA</name>
        <dbReference type="ChEBI" id="CHEBI:17843"/>
    </ligand>
</feature>
<feature type="site" description="Discriminates between blocked and unblocked aminoacyl-tRNA" evidence="1">
    <location>
        <position position="9"/>
    </location>
</feature>
<feature type="site" description="Stabilizes the basic form of H active site to accept a proton" evidence="1">
    <location>
        <position position="91"/>
    </location>
</feature>
<organism>
    <name type="scientific">Clostridium botulinum (strain Eklund 17B / Type B)</name>
    <dbReference type="NCBI Taxonomy" id="935198"/>
    <lineage>
        <taxon>Bacteria</taxon>
        <taxon>Bacillati</taxon>
        <taxon>Bacillota</taxon>
        <taxon>Clostridia</taxon>
        <taxon>Eubacteriales</taxon>
        <taxon>Clostridiaceae</taxon>
        <taxon>Clostridium</taxon>
    </lineage>
</organism>
<reference key="1">
    <citation type="submission" date="2008-04" db="EMBL/GenBank/DDBJ databases">
        <title>Complete sequence of Clostridium botulinum strain Eklund.</title>
        <authorList>
            <person name="Brinkac L.M."/>
            <person name="Brown J.L."/>
            <person name="Bruce D."/>
            <person name="Detter C."/>
            <person name="Munk C."/>
            <person name="Smith L.A."/>
            <person name="Smith T.J."/>
            <person name="Sutton G."/>
            <person name="Brettin T.S."/>
        </authorList>
    </citation>
    <scope>NUCLEOTIDE SEQUENCE [LARGE SCALE GENOMIC DNA]</scope>
    <source>
        <strain>Eklund 17B / Type B</strain>
    </source>
</reference>
<comment type="function">
    <text evidence="1">Hydrolyzes ribosome-free peptidyl-tRNAs (with 1 or more amino acids incorporated), which drop off the ribosome during protein synthesis, or as a result of ribosome stalling.</text>
</comment>
<comment type="function">
    <text evidence="1">Catalyzes the release of premature peptidyl moieties from peptidyl-tRNA molecules trapped in stalled 50S ribosomal subunits, and thus maintains levels of free tRNAs and 50S ribosomes.</text>
</comment>
<comment type="catalytic activity">
    <reaction evidence="1">
        <text>an N-acyl-L-alpha-aminoacyl-tRNA + H2O = an N-acyl-L-amino acid + a tRNA + H(+)</text>
        <dbReference type="Rhea" id="RHEA:54448"/>
        <dbReference type="Rhea" id="RHEA-COMP:10123"/>
        <dbReference type="Rhea" id="RHEA-COMP:13883"/>
        <dbReference type="ChEBI" id="CHEBI:15377"/>
        <dbReference type="ChEBI" id="CHEBI:15378"/>
        <dbReference type="ChEBI" id="CHEBI:59874"/>
        <dbReference type="ChEBI" id="CHEBI:78442"/>
        <dbReference type="ChEBI" id="CHEBI:138191"/>
        <dbReference type="EC" id="3.1.1.29"/>
    </reaction>
</comment>
<comment type="subunit">
    <text evidence="1">Monomer.</text>
</comment>
<comment type="subcellular location">
    <subcellularLocation>
        <location evidence="1">Cytoplasm</location>
    </subcellularLocation>
</comment>
<comment type="similarity">
    <text evidence="1">Belongs to the PTH family.</text>
</comment>
<proteinExistence type="inferred from homology"/>
<dbReference type="EC" id="3.1.1.29" evidence="1"/>
<dbReference type="EMBL" id="CP001056">
    <property type="protein sequence ID" value="ACD25084.1"/>
    <property type="molecule type" value="Genomic_DNA"/>
</dbReference>
<dbReference type="SMR" id="B2TI10"/>
<dbReference type="KEGG" id="cbk:CLL_A0151"/>
<dbReference type="PATRIC" id="fig|935198.13.peg.141"/>
<dbReference type="HOGENOM" id="CLU_062456_4_1_9"/>
<dbReference type="Proteomes" id="UP000001195">
    <property type="component" value="Chromosome"/>
</dbReference>
<dbReference type="GO" id="GO:0005737">
    <property type="term" value="C:cytoplasm"/>
    <property type="evidence" value="ECO:0007669"/>
    <property type="project" value="UniProtKB-SubCell"/>
</dbReference>
<dbReference type="GO" id="GO:0004045">
    <property type="term" value="F:peptidyl-tRNA hydrolase activity"/>
    <property type="evidence" value="ECO:0007669"/>
    <property type="project" value="UniProtKB-UniRule"/>
</dbReference>
<dbReference type="GO" id="GO:0000049">
    <property type="term" value="F:tRNA binding"/>
    <property type="evidence" value="ECO:0007669"/>
    <property type="project" value="UniProtKB-UniRule"/>
</dbReference>
<dbReference type="GO" id="GO:0006515">
    <property type="term" value="P:protein quality control for misfolded or incompletely synthesized proteins"/>
    <property type="evidence" value="ECO:0007669"/>
    <property type="project" value="UniProtKB-UniRule"/>
</dbReference>
<dbReference type="GO" id="GO:0072344">
    <property type="term" value="P:rescue of stalled ribosome"/>
    <property type="evidence" value="ECO:0007669"/>
    <property type="project" value="UniProtKB-UniRule"/>
</dbReference>
<dbReference type="CDD" id="cd00462">
    <property type="entry name" value="PTH"/>
    <property type="match status" value="1"/>
</dbReference>
<dbReference type="FunFam" id="3.40.50.1470:FF:000001">
    <property type="entry name" value="Peptidyl-tRNA hydrolase"/>
    <property type="match status" value="1"/>
</dbReference>
<dbReference type="Gene3D" id="3.40.50.1470">
    <property type="entry name" value="Peptidyl-tRNA hydrolase"/>
    <property type="match status" value="1"/>
</dbReference>
<dbReference type="HAMAP" id="MF_00083">
    <property type="entry name" value="Pept_tRNA_hydro_bact"/>
    <property type="match status" value="1"/>
</dbReference>
<dbReference type="InterPro" id="IPR001328">
    <property type="entry name" value="Pept_tRNA_hydro"/>
</dbReference>
<dbReference type="InterPro" id="IPR018171">
    <property type="entry name" value="Pept_tRNA_hydro_CS"/>
</dbReference>
<dbReference type="InterPro" id="IPR036416">
    <property type="entry name" value="Pept_tRNA_hydro_sf"/>
</dbReference>
<dbReference type="NCBIfam" id="TIGR00447">
    <property type="entry name" value="pth"/>
    <property type="match status" value="1"/>
</dbReference>
<dbReference type="PANTHER" id="PTHR17224">
    <property type="entry name" value="PEPTIDYL-TRNA HYDROLASE"/>
    <property type="match status" value="1"/>
</dbReference>
<dbReference type="PANTHER" id="PTHR17224:SF1">
    <property type="entry name" value="PEPTIDYL-TRNA HYDROLASE"/>
    <property type="match status" value="1"/>
</dbReference>
<dbReference type="Pfam" id="PF01195">
    <property type="entry name" value="Pept_tRNA_hydro"/>
    <property type="match status" value="1"/>
</dbReference>
<dbReference type="SUPFAM" id="SSF53178">
    <property type="entry name" value="Peptidyl-tRNA hydrolase-like"/>
    <property type="match status" value="1"/>
</dbReference>
<dbReference type="PROSITE" id="PS01195">
    <property type="entry name" value="PEPT_TRNA_HYDROL_1"/>
    <property type="match status" value="1"/>
</dbReference>
<dbReference type="PROSITE" id="PS01196">
    <property type="entry name" value="PEPT_TRNA_HYDROL_2"/>
    <property type="match status" value="1"/>
</dbReference>
<protein>
    <recommendedName>
        <fullName evidence="1">Peptidyl-tRNA hydrolase</fullName>
        <shortName evidence="1">Pth</shortName>
        <ecNumber evidence="1">3.1.1.29</ecNumber>
    </recommendedName>
</protein>
<sequence>MFLIVGLGNPGSKYDNTRHNIGFEVIDNISNEYNIDINRQKFRGVYGEGFIANNKVILLKPTTYMNLSGDSVREVANFYKISNENIIVIYDDISLDIGRLRIREKGSAGGHNGIKSIIANLSTDVFPRIKVGVGQPNIDLVNYVLGKFSKEEKEVLKESIEVATNSVEEIIKQDVNSAMNKFNGFKANKSI</sequence>
<accession>B2TI10</accession>
<name>PTH_CLOBB</name>
<gene>
    <name evidence="1" type="primary">pth</name>
    <name type="ordered locus">CLL_A0151</name>
</gene>
<keyword id="KW-0963">Cytoplasm</keyword>
<keyword id="KW-0378">Hydrolase</keyword>
<keyword id="KW-0694">RNA-binding</keyword>
<keyword id="KW-0820">tRNA-binding</keyword>
<evidence type="ECO:0000255" key="1">
    <source>
        <dbReference type="HAMAP-Rule" id="MF_00083"/>
    </source>
</evidence>